<protein>
    <recommendedName>
        <fullName evidence="1">Pyridoxine 5'-phosphate synthase</fullName>
        <shortName evidence="1">PNP synthase</shortName>
        <ecNumber evidence="1">2.6.99.2</ecNumber>
    </recommendedName>
</protein>
<sequence length="240" mass="26337">MPTLGVNIDHVATIRQARRTVEPDPIAAAVLAELGGADGITVHLREDRRHIQERDVRLLRQTVRTHLNLEMAATAEMVAIALELKPDYITLVPERREEITTEGGLDVNGQPERLQTVIDTLQQAGIPVSLFIDAEAKQIETAARLGAKFIELHTGRYAEAGSPQAQQRELETLAQGCARAIDLGVRVNAGHGLTYWNVRPVALLPGMEELNIGHTIVSRAVLVGMERAVREMKQAIQGTF</sequence>
<name>PDXJ_CYAP4</name>
<reference key="1">
    <citation type="journal article" date="2011" name="MBio">
        <title>Novel metabolic attributes of the genus Cyanothece, comprising a group of unicellular nitrogen-fixing Cyanobacteria.</title>
        <authorList>
            <person name="Bandyopadhyay A."/>
            <person name="Elvitigala T."/>
            <person name="Welsh E."/>
            <person name="Stockel J."/>
            <person name="Liberton M."/>
            <person name="Min H."/>
            <person name="Sherman L.A."/>
            <person name="Pakrasi H.B."/>
        </authorList>
    </citation>
    <scope>NUCLEOTIDE SEQUENCE [LARGE SCALE GENOMIC DNA]</scope>
    <source>
        <strain>PCC 7425 / ATCC 29141</strain>
    </source>
</reference>
<accession>B8HKL1</accession>
<feature type="chain" id="PRO_1000132548" description="Pyridoxine 5'-phosphate synthase">
    <location>
        <begin position="1"/>
        <end position="240"/>
    </location>
</feature>
<feature type="active site" description="Proton acceptor" evidence="1">
    <location>
        <position position="43"/>
    </location>
</feature>
<feature type="active site" description="Proton acceptor" evidence="1">
    <location>
        <position position="70"/>
    </location>
</feature>
<feature type="active site" description="Proton donor" evidence="1">
    <location>
        <position position="191"/>
    </location>
</feature>
<feature type="binding site" evidence="1">
    <location>
        <position position="7"/>
    </location>
    <ligand>
        <name>3-amino-2-oxopropyl phosphate</name>
        <dbReference type="ChEBI" id="CHEBI:57279"/>
    </ligand>
</feature>
<feature type="binding site" evidence="1">
    <location>
        <begin position="9"/>
        <end position="10"/>
    </location>
    <ligand>
        <name>1-deoxy-D-xylulose 5-phosphate</name>
        <dbReference type="ChEBI" id="CHEBI:57792"/>
    </ligand>
</feature>
<feature type="binding site" evidence="1">
    <location>
        <position position="18"/>
    </location>
    <ligand>
        <name>3-amino-2-oxopropyl phosphate</name>
        <dbReference type="ChEBI" id="CHEBI:57279"/>
    </ligand>
</feature>
<feature type="binding site" evidence="1">
    <location>
        <position position="45"/>
    </location>
    <ligand>
        <name>1-deoxy-D-xylulose 5-phosphate</name>
        <dbReference type="ChEBI" id="CHEBI:57792"/>
    </ligand>
</feature>
<feature type="binding site" evidence="1">
    <location>
        <position position="50"/>
    </location>
    <ligand>
        <name>1-deoxy-D-xylulose 5-phosphate</name>
        <dbReference type="ChEBI" id="CHEBI:57792"/>
    </ligand>
</feature>
<feature type="binding site" evidence="1">
    <location>
        <position position="100"/>
    </location>
    <ligand>
        <name>1-deoxy-D-xylulose 5-phosphate</name>
        <dbReference type="ChEBI" id="CHEBI:57792"/>
    </ligand>
</feature>
<feature type="binding site" evidence="1">
    <location>
        <position position="192"/>
    </location>
    <ligand>
        <name>3-amino-2-oxopropyl phosphate</name>
        <dbReference type="ChEBI" id="CHEBI:57279"/>
    </ligand>
</feature>
<feature type="binding site" evidence="1">
    <location>
        <begin position="213"/>
        <end position="214"/>
    </location>
    <ligand>
        <name>3-amino-2-oxopropyl phosphate</name>
        <dbReference type="ChEBI" id="CHEBI:57279"/>
    </ligand>
</feature>
<feature type="site" description="Transition state stabilizer" evidence="1">
    <location>
        <position position="151"/>
    </location>
</feature>
<comment type="function">
    <text evidence="1">Catalyzes the complicated ring closure reaction between the two acyclic compounds 1-deoxy-D-xylulose-5-phosphate (DXP) and 3-amino-2-oxopropyl phosphate (1-amino-acetone-3-phosphate or AAP) to form pyridoxine 5'-phosphate (PNP) and inorganic phosphate.</text>
</comment>
<comment type="catalytic activity">
    <reaction evidence="1">
        <text>3-amino-2-oxopropyl phosphate + 1-deoxy-D-xylulose 5-phosphate = pyridoxine 5'-phosphate + phosphate + 2 H2O + H(+)</text>
        <dbReference type="Rhea" id="RHEA:15265"/>
        <dbReference type="ChEBI" id="CHEBI:15377"/>
        <dbReference type="ChEBI" id="CHEBI:15378"/>
        <dbReference type="ChEBI" id="CHEBI:43474"/>
        <dbReference type="ChEBI" id="CHEBI:57279"/>
        <dbReference type="ChEBI" id="CHEBI:57792"/>
        <dbReference type="ChEBI" id="CHEBI:58589"/>
        <dbReference type="EC" id="2.6.99.2"/>
    </reaction>
</comment>
<comment type="pathway">
    <text evidence="1">Cofactor biosynthesis; pyridoxine 5'-phosphate biosynthesis; pyridoxine 5'-phosphate from D-erythrose 4-phosphate: step 5/5.</text>
</comment>
<comment type="subunit">
    <text evidence="1">Homooctamer; tetramer of dimers.</text>
</comment>
<comment type="subcellular location">
    <subcellularLocation>
        <location evidence="1">Cytoplasm</location>
    </subcellularLocation>
</comment>
<comment type="similarity">
    <text evidence="1">Belongs to the PNP synthase family.</text>
</comment>
<gene>
    <name evidence="1" type="primary">pdxJ</name>
    <name type="ordered locus">Cyan7425_4547</name>
</gene>
<evidence type="ECO:0000255" key="1">
    <source>
        <dbReference type="HAMAP-Rule" id="MF_00279"/>
    </source>
</evidence>
<dbReference type="EC" id="2.6.99.2" evidence="1"/>
<dbReference type="EMBL" id="CP001344">
    <property type="protein sequence ID" value="ACL46855.1"/>
    <property type="molecule type" value="Genomic_DNA"/>
</dbReference>
<dbReference type="SMR" id="B8HKL1"/>
<dbReference type="STRING" id="395961.Cyan7425_4547"/>
<dbReference type="KEGG" id="cyn:Cyan7425_4547"/>
<dbReference type="eggNOG" id="COG0854">
    <property type="taxonomic scope" value="Bacteria"/>
</dbReference>
<dbReference type="HOGENOM" id="CLU_074563_0_0_3"/>
<dbReference type="OrthoDB" id="9806590at2"/>
<dbReference type="UniPathway" id="UPA00244">
    <property type="reaction ID" value="UER00313"/>
</dbReference>
<dbReference type="GO" id="GO:0005829">
    <property type="term" value="C:cytosol"/>
    <property type="evidence" value="ECO:0007669"/>
    <property type="project" value="TreeGrafter"/>
</dbReference>
<dbReference type="GO" id="GO:0033856">
    <property type="term" value="F:pyridoxine 5'-phosphate synthase activity"/>
    <property type="evidence" value="ECO:0007669"/>
    <property type="project" value="UniProtKB-EC"/>
</dbReference>
<dbReference type="GO" id="GO:0008615">
    <property type="term" value="P:pyridoxine biosynthetic process"/>
    <property type="evidence" value="ECO:0007669"/>
    <property type="project" value="UniProtKB-UniRule"/>
</dbReference>
<dbReference type="CDD" id="cd00003">
    <property type="entry name" value="PNPsynthase"/>
    <property type="match status" value="1"/>
</dbReference>
<dbReference type="Gene3D" id="3.20.20.70">
    <property type="entry name" value="Aldolase class I"/>
    <property type="match status" value="1"/>
</dbReference>
<dbReference type="HAMAP" id="MF_00279">
    <property type="entry name" value="PdxJ"/>
    <property type="match status" value="1"/>
</dbReference>
<dbReference type="InterPro" id="IPR013785">
    <property type="entry name" value="Aldolase_TIM"/>
</dbReference>
<dbReference type="InterPro" id="IPR004569">
    <property type="entry name" value="PyrdxlP_synth_PdxJ"/>
</dbReference>
<dbReference type="InterPro" id="IPR036130">
    <property type="entry name" value="Pyridoxine-5'_phos_synth"/>
</dbReference>
<dbReference type="NCBIfam" id="TIGR00559">
    <property type="entry name" value="pdxJ"/>
    <property type="match status" value="1"/>
</dbReference>
<dbReference type="NCBIfam" id="NF003623">
    <property type="entry name" value="PRK05265.1-1"/>
    <property type="match status" value="1"/>
</dbReference>
<dbReference type="NCBIfam" id="NF003625">
    <property type="entry name" value="PRK05265.1-3"/>
    <property type="match status" value="1"/>
</dbReference>
<dbReference type="NCBIfam" id="NF003627">
    <property type="entry name" value="PRK05265.1-5"/>
    <property type="match status" value="1"/>
</dbReference>
<dbReference type="PANTHER" id="PTHR30456">
    <property type="entry name" value="PYRIDOXINE 5'-PHOSPHATE SYNTHASE"/>
    <property type="match status" value="1"/>
</dbReference>
<dbReference type="PANTHER" id="PTHR30456:SF0">
    <property type="entry name" value="PYRIDOXINE 5'-PHOSPHATE SYNTHASE"/>
    <property type="match status" value="1"/>
</dbReference>
<dbReference type="Pfam" id="PF03740">
    <property type="entry name" value="PdxJ"/>
    <property type="match status" value="1"/>
</dbReference>
<dbReference type="SUPFAM" id="SSF63892">
    <property type="entry name" value="Pyridoxine 5'-phosphate synthase"/>
    <property type="match status" value="1"/>
</dbReference>
<proteinExistence type="inferred from homology"/>
<keyword id="KW-0963">Cytoplasm</keyword>
<keyword id="KW-0664">Pyridoxine biosynthesis</keyword>
<keyword id="KW-0808">Transferase</keyword>
<organism>
    <name type="scientific">Cyanothece sp. (strain PCC 7425 / ATCC 29141)</name>
    <dbReference type="NCBI Taxonomy" id="395961"/>
    <lineage>
        <taxon>Bacteria</taxon>
        <taxon>Bacillati</taxon>
        <taxon>Cyanobacteriota</taxon>
        <taxon>Cyanophyceae</taxon>
        <taxon>Gomontiellales</taxon>
        <taxon>Cyanothecaceae</taxon>
        <taxon>Cyanothece</taxon>
    </lineage>
</organism>